<geneLocation type="chloroplast"/>
<dbReference type="EMBL" id="EF115542">
    <property type="protein sequence ID" value="ABK79502.1"/>
    <property type="molecule type" value="Genomic_DNA"/>
</dbReference>
<dbReference type="RefSeq" id="YP_899413.1">
    <property type="nucleotide sequence ID" value="NC_008602.1"/>
</dbReference>
<dbReference type="SMR" id="A1E9T0"/>
<dbReference type="FunCoup" id="A1E9T0">
    <property type="interactions" value="307"/>
</dbReference>
<dbReference type="STRING" id="4558.A1E9T0"/>
<dbReference type="GeneID" id="4549165"/>
<dbReference type="KEGG" id="sbi:4549165"/>
<dbReference type="InParanoid" id="A1E9T0"/>
<dbReference type="OrthoDB" id="681737at2759"/>
<dbReference type="Proteomes" id="UP000000768">
    <property type="component" value="Chloroplast"/>
</dbReference>
<dbReference type="ExpressionAtlas" id="A1E9T0">
    <property type="expression patterns" value="baseline"/>
</dbReference>
<dbReference type="GO" id="GO:0009535">
    <property type="term" value="C:chloroplast thylakoid membrane"/>
    <property type="evidence" value="ECO:0007669"/>
    <property type="project" value="UniProtKB-SubCell"/>
</dbReference>
<dbReference type="GO" id="GO:0045259">
    <property type="term" value="C:proton-transporting ATP synthase complex"/>
    <property type="evidence" value="ECO:0007669"/>
    <property type="project" value="UniProtKB-KW"/>
</dbReference>
<dbReference type="GO" id="GO:0005524">
    <property type="term" value="F:ATP binding"/>
    <property type="evidence" value="ECO:0007669"/>
    <property type="project" value="UniProtKB-UniRule"/>
</dbReference>
<dbReference type="GO" id="GO:0046933">
    <property type="term" value="F:proton-transporting ATP synthase activity, rotational mechanism"/>
    <property type="evidence" value="ECO:0007669"/>
    <property type="project" value="UniProtKB-UniRule"/>
</dbReference>
<dbReference type="GO" id="GO:0015986">
    <property type="term" value="P:proton motive force-driven ATP synthesis"/>
    <property type="evidence" value="ECO:0000318"/>
    <property type="project" value="GO_Central"/>
</dbReference>
<dbReference type="CDD" id="cd12152">
    <property type="entry name" value="F1-ATPase_delta"/>
    <property type="match status" value="1"/>
</dbReference>
<dbReference type="FunFam" id="2.60.15.10:FF:000002">
    <property type="entry name" value="ATP synthase epsilon chain, chloroplastic"/>
    <property type="match status" value="1"/>
</dbReference>
<dbReference type="Gene3D" id="6.10.140.480">
    <property type="match status" value="1"/>
</dbReference>
<dbReference type="Gene3D" id="2.60.15.10">
    <property type="entry name" value="F0F1 ATP synthase delta/epsilon subunit, N-terminal"/>
    <property type="match status" value="1"/>
</dbReference>
<dbReference type="HAMAP" id="MF_00530">
    <property type="entry name" value="ATP_synth_epsil_bac"/>
    <property type="match status" value="1"/>
</dbReference>
<dbReference type="InterPro" id="IPR001469">
    <property type="entry name" value="ATP_synth_F1_dsu/esu"/>
</dbReference>
<dbReference type="InterPro" id="IPR020546">
    <property type="entry name" value="ATP_synth_F1_dsu/esu_N"/>
</dbReference>
<dbReference type="InterPro" id="IPR020547">
    <property type="entry name" value="ATP_synth_F1_esu_C"/>
</dbReference>
<dbReference type="InterPro" id="IPR036771">
    <property type="entry name" value="ATPsynth_dsu/esu_N"/>
</dbReference>
<dbReference type="NCBIfam" id="TIGR01216">
    <property type="entry name" value="ATP_synt_epsi"/>
    <property type="match status" value="1"/>
</dbReference>
<dbReference type="PANTHER" id="PTHR13822">
    <property type="entry name" value="ATP SYNTHASE DELTA/EPSILON CHAIN"/>
    <property type="match status" value="1"/>
</dbReference>
<dbReference type="PANTHER" id="PTHR13822:SF10">
    <property type="entry name" value="ATP SYNTHASE EPSILON CHAIN, CHLOROPLASTIC"/>
    <property type="match status" value="1"/>
</dbReference>
<dbReference type="Pfam" id="PF00401">
    <property type="entry name" value="ATP-synt_DE"/>
    <property type="match status" value="1"/>
</dbReference>
<dbReference type="Pfam" id="PF02823">
    <property type="entry name" value="ATP-synt_DE_N"/>
    <property type="match status" value="1"/>
</dbReference>
<dbReference type="SUPFAM" id="SSF51344">
    <property type="entry name" value="Epsilon subunit of F1F0-ATP synthase N-terminal domain"/>
    <property type="match status" value="1"/>
</dbReference>
<accession>A1E9T0</accession>
<proteinExistence type="inferred from homology"/>
<protein>
    <recommendedName>
        <fullName evidence="1">ATP synthase epsilon chain, chloroplastic</fullName>
    </recommendedName>
    <alternativeName>
        <fullName evidence="1">ATP synthase F1 sector epsilon subunit</fullName>
    </alternativeName>
    <alternativeName>
        <fullName evidence="1">F-ATPase epsilon subunit</fullName>
    </alternativeName>
</protein>
<evidence type="ECO:0000255" key="1">
    <source>
        <dbReference type="HAMAP-Rule" id="MF_00530"/>
    </source>
</evidence>
<reference key="1">
    <citation type="journal article" date="2007" name="Theor. Appl. Genet.">
        <title>Complete chloroplast genome sequences of Hordeum vulgare, Sorghum bicolor and Agrostis stolonifera, and comparative analyses with other grass genomes.</title>
        <authorList>
            <person name="Saski C."/>
            <person name="Lee S.-B."/>
            <person name="Fjellheim S."/>
            <person name="Guda C."/>
            <person name="Jansen R.K."/>
            <person name="Luo H."/>
            <person name="Tomkins J."/>
            <person name="Rognli O.A."/>
            <person name="Daniell H."/>
            <person name="Clarke J.L."/>
        </authorList>
    </citation>
    <scope>NUCLEOTIDE SEQUENCE [LARGE SCALE GENOMIC DNA]</scope>
    <source>
        <strain>cv. BTx623</strain>
    </source>
</reference>
<name>ATPE_SORBI</name>
<organism>
    <name type="scientific">Sorghum bicolor</name>
    <name type="common">Sorghum</name>
    <name type="synonym">Sorghum vulgare</name>
    <dbReference type="NCBI Taxonomy" id="4558"/>
    <lineage>
        <taxon>Eukaryota</taxon>
        <taxon>Viridiplantae</taxon>
        <taxon>Streptophyta</taxon>
        <taxon>Embryophyta</taxon>
        <taxon>Tracheophyta</taxon>
        <taxon>Spermatophyta</taxon>
        <taxon>Magnoliopsida</taxon>
        <taxon>Liliopsida</taxon>
        <taxon>Poales</taxon>
        <taxon>Poaceae</taxon>
        <taxon>PACMAD clade</taxon>
        <taxon>Panicoideae</taxon>
        <taxon>Andropogonodae</taxon>
        <taxon>Andropogoneae</taxon>
        <taxon>Sorghinae</taxon>
        <taxon>Sorghum</taxon>
    </lineage>
</organism>
<gene>
    <name evidence="1" type="primary">atpE</name>
</gene>
<keyword id="KW-0066">ATP synthesis</keyword>
<keyword id="KW-0139">CF(1)</keyword>
<keyword id="KW-0150">Chloroplast</keyword>
<keyword id="KW-0375">Hydrogen ion transport</keyword>
<keyword id="KW-0406">Ion transport</keyword>
<keyword id="KW-0472">Membrane</keyword>
<keyword id="KW-0934">Plastid</keyword>
<keyword id="KW-1185">Reference proteome</keyword>
<keyword id="KW-0793">Thylakoid</keyword>
<keyword id="KW-0813">Transport</keyword>
<sequence length="137" mass="15218">MKLNLYVLTPKRIIWDCEVKEIILSTNSGQIGVLPNHAPINTAVDMGPLRIRLLNDQWLTAVLWSGFARIVNNEIIILGNDAELGSDIDPEEAQQALEIAEANLSKAEGTKELVEAKLALRRARIRVEAVNWIPPSN</sequence>
<feature type="chain" id="PRO_0000275220" description="ATP synthase epsilon chain, chloroplastic">
    <location>
        <begin position="1"/>
        <end position="137"/>
    </location>
</feature>
<comment type="function">
    <text evidence="1">Produces ATP from ADP in the presence of a proton gradient across the membrane.</text>
</comment>
<comment type="subunit">
    <text evidence="1">F-type ATPases have 2 components, CF(1) - the catalytic core - and CF(0) - the membrane proton channel. CF(1) has five subunits: alpha(3), beta(3), gamma(1), delta(1), epsilon(1). CF(0) has three main subunits: a, b and c.</text>
</comment>
<comment type="subcellular location">
    <subcellularLocation>
        <location evidence="1">Plastid</location>
        <location evidence="1">Chloroplast thylakoid membrane</location>
        <topology evidence="1">Peripheral membrane protein</topology>
    </subcellularLocation>
</comment>
<comment type="similarity">
    <text evidence="1">Belongs to the ATPase epsilon chain family.</text>
</comment>